<accession>Q8H8N3</accession>
<accession>Q0DN45</accession>
<comment type="function">
    <text evidence="1">Probable component of the wybutosine biosynthesis pathway. Wybutosine is a hyper modified guanosine with a tricyclic base found at the 3'-position adjacent to the anticodon of eukaryotic phenylalanine tRNA. Catalyzes the condensation of N-methylguanine with 2 carbon atoms from pyruvate to form the tricyclic 4-demethylwyosine, an intermediate in wybutosine biosynthesis (By similarity).</text>
</comment>
<comment type="catalytic activity">
    <reaction>
        <text>N(1)-methylguanosine(37) in tRNA(Phe) + pyruvate + S-adenosyl-L-methionine = 4-demethylwyosine(37) in tRNA(Phe) + 5'-deoxyadenosine + L-methionine + CO2 + H2O</text>
        <dbReference type="Rhea" id="RHEA:36347"/>
        <dbReference type="Rhea" id="RHEA-COMP:10164"/>
        <dbReference type="Rhea" id="RHEA-COMP:10165"/>
        <dbReference type="ChEBI" id="CHEBI:15361"/>
        <dbReference type="ChEBI" id="CHEBI:15377"/>
        <dbReference type="ChEBI" id="CHEBI:16526"/>
        <dbReference type="ChEBI" id="CHEBI:17319"/>
        <dbReference type="ChEBI" id="CHEBI:57844"/>
        <dbReference type="ChEBI" id="CHEBI:59789"/>
        <dbReference type="ChEBI" id="CHEBI:64315"/>
        <dbReference type="ChEBI" id="CHEBI:73542"/>
        <dbReference type="EC" id="4.1.3.44"/>
    </reaction>
</comment>
<comment type="cofactor">
    <cofactor evidence="1">
        <name>[4Fe-4S] cluster</name>
        <dbReference type="ChEBI" id="CHEBI:49883"/>
    </cofactor>
    <text evidence="1">Binds 1 [4Fe-4S] cluster. The cluster is coordinated with 3 cysteines and an exchangeable S-adenosyl-L-methionine.</text>
</comment>
<comment type="pathway">
    <text>tRNA modification; wybutosine-tRNA(Phe) biosynthesis.</text>
</comment>
<comment type="alternative products">
    <event type="alternative splicing"/>
    <isoform>
        <id>Q8H8N3-1</id>
        <name>1</name>
        <sequence type="displayed"/>
    </isoform>
    <isoform>
        <id>Q8H8N3-2</id>
        <name>2</name>
        <sequence type="described" ref="VSP_024072"/>
    </isoform>
</comment>
<comment type="similarity">
    <text evidence="7">Belongs to the TYW1 family.</text>
</comment>
<comment type="sequence caution" evidence="7">
    <conflict type="frameshift">
        <sequence resource="EMBL" id="AK100507"/>
    </conflict>
</comment>
<feature type="chain" id="PRO_0000281833" description="S-adenosyl-L-methionine-dependent tRNA 4-demethylwyosine synthase">
    <location>
        <begin position="1"/>
        <end position="653"/>
    </location>
</feature>
<feature type="domain" description="Flavodoxin-like" evidence="3">
    <location>
        <begin position="56"/>
        <end position="204"/>
    </location>
</feature>
<feature type="domain" description="Radical SAM core" evidence="4">
    <location>
        <begin position="324"/>
        <end position="567"/>
    </location>
</feature>
<feature type="region of interest" description="Disordered" evidence="5">
    <location>
        <begin position="211"/>
        <end position="276"/>
    </location>
</feature>
<feature type="region of interest" description="Disordered" evidence="5">
    <location>
        <begin position="630"/>
        <end position="653"/>
    </location>
</feature>
<feature type="compositionally biased region" description="Acidic residues" evidence="5">
    <location>
        <begin position="221"/>
        <end position="249"/>
    </location>
</feature>
<feature type="binding site" evidence="3">
    <location>
        <begin position="62"/>
        <end position="66"/>
    </location>
    <ligand>
        <name>FMN</name>
        <dbReference type="ChEBI" id="CHEBI:58210"/>
    </ligand>
</feature>
<feature type="binding site" evidence="3">
    <location>
        <begin position="148"/>
        <end position="180"/>
    </location>
    <ligand>
        <name>FMN</name>
        <dbReference type="ChEBI" id="CHEBI:58210"/>
    </ligand>
</feature>
<feature type="binding site" evidence="2">
    <location>
        <position position="340"/>
    </location>
    <ligand>
        <name>[4Fe-4S] cluster</name>
        <dbReference type="ChEBI" id="CHEBI:49883"/>
        <note>4Fe-4S-S-AdoMet</note>
    </ligand>
</feature>
<feature type="binding site" evidence="2">
    <location>
        <position position="344"/>
    </location>
    <ligand>
        <name>[4Fe-4S] cluster</name>
        <dbReference type="ChEBI" id="CHEBI:49883"/>
        <note>4Fe-4S-S-AdoMet</note>
    </ligand>
</feature>
<feature type="binding site" evidence="2">
    <location>
        <position position="347"/>
    </location>
    <ligand>
        <name>[4Fe-4S] cluster</name>
        <dbReference type="ChEBI" id="CHEBI:49883"/>
        <note>4Fe-4S-S-AdoMet</note>
    </ligand>
</feature>
<feature type="splice variant" id="VSP_024072" description="In isoform 2." evidence="6">
    <location>
        <begin position="110"/>
        <end position="162"/>
    </location>
</feature>
<protein>
    <recommendedName>
        <fullName>S-adenosyl-L-methionine-dependent tRNA 4-demethylwyosine synthase</fullName>
        <ecNumber>4.1.3.44</ecNumber>
    </recommendedName>
    <alternativeName>
        <fullName>tRNA wybutosine-synthesizing protein 1 homolog</fullName>
    </alternativeName>
</protein>
<organism>
    <name type="scientific">Oryza sativa subsp. japonica</name>
    <name type="common">Rice</name>
    <dbReference type="NCBI Taxonomy" id="39947"/>
    <lineage>
        <taxon>Eukaryota</taxon>
        <taxon>Viridiplantae</taxon>
        <taxon>Streptophyta</taxon>
        <taxon>Embryophyta</taxon>
        <taxon>Tracheophyta</taxon>
        <taxon>Spermatophyta</taxon>
        <taxon>Magnoliopsida</taxon>
        <taxon>Liliopsida</taxon>
        <taxon>Poales</taxon>
        <taxon>Poaceae</taxon>
        <taxon>BOP clade</taxon>
        <taxon>Oryzoideae</taxon>
        <taxon>Oryzeae</taxon>
        <taxon>Oryzinae</taxon>
        <taxon>Oryza</taxon>
        <taxon>Oryza sativa</taxon>
    </lineage>
</organism>
<name>TYW1_ORYSJ</name>
<reference key="1">
    <citation type="journal article" date="2005" name="Genome Res.">
        <title>Sequence, annotation, and analysis of synteny between rice chromosome 3 and diverged grass species.</title>
        <authorList>
            <consortium name="The rice chromosome 3 sequencing consortium"/>
            <person name="Buell C.R."/>
            <person name="Yuan Q."/>
            <person name="Ouyang S."/>
            <person name="Liu J."/>
            <person name="Zhu W."/>
            <person name="Wang A."/>
            <person name="Maiti R."/>
            <person name="Haas B."/>
            <person name="Wortman J."/>
            <person name="Pertea M."/>
            <person name="Jones K.M."/>
            <person name="Kim M."/>
            <person name="Overton L."/>
            <person name="Tsitrin T."/>
            <person name="Fadrosh D."/>
            <person name="Bera J."/>
            <person name="Weaver B."/>
            <person name="Jin S."/>
            <person name="Johri S."/>
            <person name="Reardon M."/>
            <person name="Webb K."/>
            <person name="Hill J."/>
            <person name="Moffat K."/>
            <person name="Tallon L."/>
            <person name="Van Aken S."/>
            <person name="Lewis M."/>
            <person name="Utterback T."/>
            <person name="Feldblyum T."/>
            <person name="Zismann V."/>
            <person name="Iobst S."/>
            <person name="Hsiao J."/>
            <person name="de Vazeille A.R."/>
            <person name="Salzberg S.L."/>
            <person name="White O."/>
            <person name="Fraser C.M."/>
            <person name="Yu Y."/>
            <person name="Kim H."/>
            <person name="Rambo T."/>
            <person name="Currie J."/>
            <person name="Collura K."/>
            <person name="Kernodle-Thompson S."/>
            <person name="Wei F."/>
            <person name="Kudrna K."/>
            <person name="Ammiraju J.S.S."/>
            <person name="Luo M."/>
            <person name="Goicoechea J.L."/>
            <person name="Wing R.A."/>
            <person name="Henry D."/>
            <person name="Oates R."/>
            <person name="Palmer M."/>
            <person name="Pries G."/>
            <person name="Saski C."/>
            <person name="Simmons J."/>
            <person name="Soderlund C."/>
            <person name="Nelson W."/>
            <person name="de la Bastide M."/>
            <person name="Spiegel L."/>
            <person name="Nascimento L."/>
            <person name="Huang E."/>
            <person name="Preston R."/>
            <person name="Zutavern T."/>
            <person name="Palmer L."/>
            <person name="O'Shaughnessy A."/>
            <person name="Dike S."/>
            <person name="McCombie W.R."/>
            <person name="Minx P."/>
            <person name="Cordum H."/>
            <person name="Wilson R."/>
            <person name="Jin W."/>
            <person name="Lee H.R."/>
            <person name="Jiang J."/>
            <person name="Jackson S."/>
        </authorList>
    </citation>
    <scope>NUCLEOTIDE SEQUENCE [LARGE SCALE GENOMIC DNA]</scope>
    <source>
        <strain>cv. Nipponbare</strain>
    </source>
</reference>
<reference key="2">
    <citation type="journal article" date="2005" name="Nature">
        <title>The map-based sequence of the rice genome.</title>
        <authorList>
            <consortium name="International rice genome sequencing project (IRGSP)"/>
        </authorList>
    </citation>
    <scope>NUCLEOTIDE SEQUENCE [LARGE SCALE GENOMIC DNA]</scope>
    <source>
        <strain>cv. Nipponbare</strain>
    </source>
</reference>
<reference key="3">
    <citation type="journal article" date="2008" name="Nucleic Acids Res.">
        <title>The rice annotation project database (RAP-DB): 2008 update.</title>
        <authorList>
            <consortium name="The rice annotation project (RAP)"/>
        </authorList>
    </citation>
    <scope>GENOME REANNOTATION</scope>
    <source>
        <strain>cv. Nipponbare</strain>
    </source>
</reference>
<reference key="4">
    <citation type="journal article" date="2013" name="Rice">
        <title>Improvement of the Oryza sativa Nipponbare reference genome using next generation sequence and optical map data.</title>
        <authorList>
            <person name="Kawahara Y."/>
            <person name="de la Bastide M."/>
            <person name="Hamilton J.P."/>
            <person name="Kanamori H."/>
            <person name="McCombie W.R."/>
            <person name="Ouyang S."/>
            <person name="Schwartz D.C."/>
            <person name="Tanaka T."/>
            <person name="Wu J."/>
            <person name="Zhou S."/>
            <person name="Childs K.L."/>
            <person name="Davidson R.M."/>
            <person name="Lin H."/>
            <person name="Quesada-Ocampo L."/>
            <person name="Vaillancourt B."/>
            <person name="Sakai H."/>
            <person name="Lee S.S."/>
            <person name="Kim J."/>
            <person name="Numa H."/>
            <person name="Itoh T."/>
            <person name="Buell C.R."/>
            <person name="Matsumoto T."/>
        </authorList>
    </citation>
    <scope>GENOME REANNOTATION</scope>
    <source>
        <strain>cv. Nipponbare</strain>
    </source>
</reference>
<reference key="5">
    <citation type="journal article" date="2003" name="Science">
        <title>Collection, mapping, and annotation of over 28,000 cDNA clones from japonica rice.</title>
        <authorList>
            <consortium name="The rice full-length cDNA consortium"/>
        </authorList>
    </citation>
    <scope>NUCLEOTIDE SEQUENCE [LARGE SCALE MRNA] (ISOFORM 2)</scope>
    <source>
        <strain>cv. Nipponbare</strain>
    </source>
</reference>
<proteinExistence type="evidence at transcript level"/>
<sequence length="653" mass="71423">MPPPFPTATAAASTTSHLALLLLLSSSSVFFLYKSLRLRRNNPPSPPPGQGPAPTPTLLYASATGTSKALAAGLSRRLAEAGVTAHPADAAAFDPDDLPSLPLLLLVLPTHDGGAPPPAAAFLARWLEESAADFRAGAALLSGLRFAVFGVGSRAYGETFNAAARSFSRWLRALGAAEVVAVGEGDVDGGDLEVVFEEWCGRVVRVVKGEEIGEGHNGESDGFDELEEEESDDDDDEEEVDGGEVDMEDIAGKAPAARRRNGKVEGALSNGGENGVRDMVTPIIRTSLEKQGYKIIGSHSGVKICRWTKSQLRGRGGCYKHSFYGIESHRCMEATPSLACANKCVFCWRHHTNPVGKSWKWKMDDPLDIVNAAIDQHTKMVKQMKGVPGVKPERLAEGLSPRHCALSLVGEPIMYPEINVLIDELHRRHISTFLVTNAQFPDKIKTLKPITQLYVSVDAATKESLKAVDRPLFSDFWERFLDSLKSLHDKDQRTVYRLTLVKGWNAEEIDGYAKLLSLGQPDFIEIKGVTYCGSSATSKLTMENVPWHSDVKDFSEALALKSGGVYEVACEHAHSCCVLLAKVDKFKINGKWHTWIDYDRFHELVTSGKPFRSQDYMALTPSWAVYGAEEGGFDPDQSRYKKERRHGAAALKD</sequence>
<evidence type="ECO:0000250" key="1"/>
<evidence type="ECO:0000255" key="2"/>
<evidence type="ECO:0000255" key="3">
    <source>
        <dbReference type="PROSITE-ProRule" id="PRU00088"/>
    </source>
</evidence>
<evidence type="ECO:0000255" key="4">
    <source>
        <dbReference type="PROSITE-ProRule" id="PRU01266"/>
    </source>
</evidence>
<evidence type="ECO:0000256" key="5">
    <source>
        <dbReference type="SAM" id="MobiDB-lite"/>
    </source>
</evidence>
<evidence type="ECO:0000303" key="6">
    <source>
    </source>
</evidence>
<evidence type="ECO:0000305" key="7"/>
<keyword id="KW-0004">4Fe-4S</keyword>
<keyword id="KW-0025">Alternative splicing</keyword>
<keyword id="KW-0408">Iron</keyword>
<keyword id="KW-0411">Iron-sulfur</keyword>
<keyword id="KW-0456">Lyase</keyword>
<keyword id="KW-0479">Metal-binding</keyword>
<keyword id="KW-0547">Nucleotide-binding</keyword>
<keyword id="KW-1185">Reference proteome</keyword>
<keyword id="KW-0949">S-adenosyl-L-methionine</keyword>
<keyword id="KW-0819">tRNA processing</keyword>
<gene>
    <name type="primary">TYW1</name>
    <name type="ordered locus">Os03g0775300</name>
    <name type="ordered locus">LOC_Os03g56390</name>
    <name type="ORF">OSJNBa0070N04.14</name>
</gene>
<dbReference type="EC" id="4.1.3.44"/>
<dbReference type="EMBL" id="AC091494">
    <property type="protein sequence ID" value="AAN65027.1"/>
    <property type="molecule type" value="Genomic_DNA"/>
</dbReference>
<dbReference type="EMBL" id="DP000009">
    <property type="protein sequence ID" value="ABF99122.1"/>
    <property type="molecule type" value="Genomic_DNA"/>
</dbReference>
<dbReference type="EMBL" id="AP008209">
    <property type="protein sequence ID" value="BAF13343.1"/>
    <property type="molecule type" value="Genomic_DNA"/>
</dbReference>
<dbReference type="EMBL" id="AP014959">
    <property type="protein sequence ID" value="BAS86627.1"/>
    <property type="molecule type" value="Genomic_DNA"/>
</dbReference>
<dbReference type="EMBL" id="AK100507">
    <property type="status" value="NOT_ANNOTATED_CDS"/>
    <property type="molecule type" value="mRNA"/>
</dbReference>
<dbReference type="RefSeq" id="XP_015631211.1">
    <property type="nucleotide sequence ID" value="XM_015775725.1"/>
</dbReference>
<dbReference type="SMR" id="Q8H8N3"/>
<dbReference type="FunCoup" id="Q8H8N3">
    <property type="interactions" value="1756"/>
</dbReference>
<dbReference type="STRING" id="39947.Q8H8N3"/>
<dbReference type="PaxDb" id="39947-Q8H8N3"/>
<dbReference type="KEGG" id="dosa:Os03g0775300"/>
<dbReference type="eggNOG" id="KOG1160">
    <property type="taxonomic scope" value="Eukaryota"/>
</dbReference>
<dbReference type="InParanoid" id="Q8H8N3"/>
<dbReference type="OMA" id="RAFNEWC"/>
<dbReference type="OrthoDB" id="271553at2759"/>
<dbReference type="UniPathway" id="UPA00375"/>
<dbReference type="Proteomes" id="UP000000763">
    <property type="component" value="Chromosome 3"/>
</dbReference>
<dbReference type="Proteomes" id="UP000059680">
    <property type="component" value="Chromosome 3"/>
</dbReference>
<dbReference type="GO" id="GO:0051539">
    <property type="term" value="F:4 iron, 4 sulfur cluster binding"/>
    <property type="evidence" value="ECO:0007669"/>
    <property type="project" value="UniProtKB-KW"/>
</dbReference>
<dbReference type="GO" id="GO:0010181">
    <property type="term" value="F:FMN binding"/>
    <property type="evidence" value="ECO:0007669"/>
    <property type="project" value="InterPro"/>
</dbReference>
<dbReference type="GO" id="GO:0046872">
    <property type="term" value="F:metal ion binding"/>
    <property type="evidence" value="ECO:0007669"/>
    <property type="project" value="UniProtKB-KW"/>
</dbReference>
<dbReference type="GO" id="GO:0102521">
    <property type="term" value="F:tRNA-4-demethylwyosine synthase activity"/>
    <property type="evidence" value="ECO:0007669"/>
    <property type="project" value="UniProtKB-EC"/>
</dbReference>
<dbReference type="GO" id="GO:0031591">
    <property type="term" value="P:wybutosine biosynthetic process"/>
    <property type="evidence" value="ECO:0000318"/>
    <property type="project" value="GO_Central"/>
</dbReference>
<dbReference type="FunFam" id="3.20.20.70:FF:000196">
    <property type="entry name" value="S-adenosyl-L-methionine-dependent tRNA 4-demethylwyosine synthase"/>
    <property type="match status" value="1"/>
</dbReference>
<dbReference type="Gene3D" id="3.40.50.360">
    <property type="match status" value="1"/>
</dbReference>
<dbReference type="Gene3D" id="3.20.20.70">
    <property type="entry name" value="Aldolase class I"/>
    <property type="match status" value="1"/>
</dbReference>
<dbReference type="InterPro" id="IPR013785">
    <property type="entry name" value="Aldolase_TIM"/>
</dbReference>
<dbReference type="InterPro" id="IPR001094">
    <property type="entry name" value="Flavdoxin-like"/>
</dbReference>
<dbReference type="InterPro" id="IPR008254">
    <property type="entry name" value="Flavodoxin/NO_synth"/>
</dbReference>
<dbReference type="InterPro" id="IPR029039">
    <property type="entry name" value="Flavoprotein-like_sf"/>
</dbReference>
<dbReference type="InterPro" id="IPR007197">
    <property type="entry name" value="rSAM"/>
</dbReference>
<dbReference type="InterPro" id="IPR013917">
    <property type="entry name" value="tRNA_wybutosine-synth"/>
</dbReference>
<dbReference type="InterPro" id="IPR034556">
    <property type="entry name" value="tRNA_wybutosine-synthase"/>
</dbReference>
<dbReference type="PANTHER" id="PTHR13930">
    <property type="entry name" value="S-ADENOSYL-L-METHIONINE-DEPENDENT TRNA 4-DEMETHYLWYOSINE SYNTHASE"/>
    <property type="match status" value="1"/>
</dbReference>
<dbReference type="PANTHER" id="PTHR13930:SF0">
    <property type="entry name" value="S-ADENOSYL-L-METHIONINE-DEPENDENT TRNA 4-DEMETHYLWYOSINE SYNTHASE TYW1-RELATED"/>
    <property type="match status" value="1"/>
</dbReference>
<dbReference type="Pfam" id="PF00258">
    <property type="entry name" value="Flavodoxin_1"/>
    <property type="match status" value="1"/>
</dbReference>
<dbReference type="Pfam" id="PF04055">
    <property type="entry name" value="Radical_SAM"/>
    <property type="match status" value="1"/>
</dbReference>
<dbReference type="Pfam" id="PF08608">
    <property type="entry name" value="Wyosine_form"/>
    <property type="match status" value="1"/>
</dbReference>
<dbReference type="PRINTS" id="PR00369">
    <property type="entry name" value="FLAVODOXIN"/>
</dbReference>
<dbReference type="SFLD" id="SFLDS00029">
    <property type="entry name" value="Radical_SAM"/>
    <property type="match status" value="1"/>
</dbReference>
<dbReference type="SFLD" id="SFLDF00284">
    <property type="entry name" value="tRNA_wybutosine-synthesizing"/>
    <property type="match status" value="1"/>
</dbReference>
<dbReference type="SUPFAM" id="SSF52218">
    <property type="entry name" value="Flavoproteins"/>
    <property type="match status" value="1"/>
</dbReference>
<dbReference type="SUPFAM" id="SSF102114">
    <property type="entry name" value="Radical SAM enzymes"/>
    <property type="match status" value="1"/>
</dbReference>
<dbReference type="PROSITE" id="PS50902">
    <property type="entry name" value="FLAVODOXIN_LIKE"/>
    <property type="match status" value="1"/>
</dbReference>
<dbReference type="PROSITE" id="PS51918">
    <property type="entry name" value="RADICAL_SAM"/>
    <property type="match status" value="1"/>
</dbReference>